<name>NARH_ECOLI</name>
<accession>P11349</accession>
<proteinExistence type="evidence at protein level"/>
<keyword id="KW-0002">3D-structure</keyword>
<keyword id="KW-0003">3Fe-4S</keyword>
<keyword id="KW-0004">4Fe-4S</keyword>
<keyword id="KW-1003">Cell membrane</keyword>
<keyword id="KW-0903">Direct protein sequencing</keyword>
<keyword id="KW-0249">Electron transport</keyword>
<keyword id="KW-0408">Iron</keyword>
<keyword id="KW-0411">Iron-sulfur</keyword>
<keyword id="KW-0472">Membrane</keyword>
<keyword id="KW-0479">Metal-binding</keyword>
<keyword id="KW-0534">Nitrate assimilation</keyword>
<keyword id="KW-0560">Oxidoreductase</keyword>
<keyword id="KW-1185">Reference proteome</keyword>
<keyword id="KW-0677">Repeat</keyword>
<keyword id="KW-0813">Transport</keyword>
<feature type="chain" id="PRO_0000096720" description="Respiratory nitrate reductase 1 beta chain">
    <location>
        <begin position="1"/>
        <end position="512"/>
    </location>
</feature>
<feature type="domain" description="4Fe-4S ferredoxin-type 1" evidence="1">
    <location>
        <begin position="7"/>
        <end position="35"/>
    </location>
</feature>
<feature type="domain" description="4Fe-4S ferredoxin-type 2" evidence="1">
    <location>
        <begin position="175"/>
        <end position="206"/>
    </location>
</feature>
<feature type="domain" description="4Fe-4S ferredoxin-type 3" evidence="1">
    <location>
        <begin position="208"/>
        <end position="237"/>
    </location>
</feature>
<feature type="binding site" evidence="2 3">
    <location>
        <position position="16"/>
    </location>
    <ligand>
        <name>[4Fe-4S] cluster</name>
        <dbReference type="ChEBI" id="CHEBI:49883"/>
        <label>1</label>
    </ligand>
</feature>
<feature type="binding site" evidence="2 3">
    <location>
        <position position="19"/>
    </location>
    <ligand>
        <name>[4Fe-4S] cluster</name>
        <dbReference type="ChEBI" id="CHEBI:49883"/>
        <label>1</label>
    </ligand>
</feature>
<feature type="binding site" evidence="2 3">
    <location>
        <position position="22"/>
    </location>
    <ligand>
        <name>[4Fe-4S] cluster</name>
        <dbReference type="ChEBI" id="CHEBI:49883"/>
        <label>1</label>
    </ligand>
</feature>
<feature type="binding site" evidence="2 3">
    <location>
        <position position="26"/>
    </location>
    <ligand>
        <name>[4Fe-4S] cluster</name>
        <dbReference type="ChEBI" id="CHEBI:49883"/>
        <label>2</label>
    </ligand>
</feature>
<feature type="binding site" evidence="2 3">
    <location>
        <position position="184"/>
    </location>
    <ligand>
        <name>[4Fe-4S] cluster</name>
        <dbReference type="ChEBI" id="CHEBI:49883"/>
        <label>3</label>
    </ligand>
</feature>
<feature type="binding site" evidence="2 3">
    <location>
        <position position="187"/>
    </location>
    <ligand>
        <name>[4Fe-4S] cluster</name>
        <dbReference type="ChEBI" id="CHEBI:49883"/>
        <label>3</label>
    </ligand>
</feature>
<feature type="binding site" evidence="2 3">
    <location>
        <position position="192"/>
    </location>
    <ligand>
        <name>[4Fe-4S] cluster</name>
        <dbReference type="ChEBI" id="CHEBI:49883"/>
        <label>3</label>
    </ligand>
</feature>
<feature type="binding site" evidence="2 3">
    <location>
        <position position="196"/>
    </location>
    <ligand>
        <name>[3Fe-4S] cluster</name>
        <dbReference type="ChEBI" id="CHEBI:21137"/>
    </ligand>
</feature>
<feature type="binding site" evidence="2 3">
    <location>
        <position position="217"/>
    </location>
    <ligand>
        <name>[3Fe-4S] cluster</name>
        <dbReference type="ChEBI" id="CHEBI:21137"/>
    </ligand>
</feature>
<feature type="binding site" evidence="2 3">
    <location>
        <position position="223"/>
    </location>
    <ligand>
        <name>[3Fe-4S] cluster</name>
        <dbReference type="ChEBI" id="CHEBI:21137"/>
    </ligand>
</feature>
<feature type="binding site" evidence="2 3">
    <location>
        <position position="227"/>
    </location>
    <ligand>
        <name>[4Fe-4S] cluster</name>
        <dbReference type="ChEBI" id="CHEBI:49883"/>
        <label>3</label>
    </ligand>
</feature>
<feature type="binding site" evidence="2 3">
    <location>
        <position position="244"/>
    </location>
    <ligand>
        <name>[4Fe-4S] cluster</name>
        <dbReference type="ChEBI" id="CHEBI:49883"/>
        <label>2</label>
    </ligand>
</feature>
<feature type="binding site" evidence="2 3">
    <location>
        <position position="247"/>
    </location>
    <ligand>
        <name>[4Fe-4S] cluster</name>
        <dbReference type="ChEBI" id="CHEBI:49883"/>
        <label>2</label>
    </ligand>
</feature>
<feature type="binding site" evidence="2 3">
    <location>
        <position position="259"/>
    </location>
    <ligand>
        <name>[4Fe-4S] cluster</name>
        <dbReference type="ChEBI" id="CHEBI:49883"/>
        <label>2</label>
    </ligand>
</feature>
<feature type="binding site" evidence="2 3">
    <location>
        <position position="263"/>
    </location>
    <ligand>
        <name>[4Fe-4S] cluster</name>
        <dbReference type="ChEBI" id="CHEBI:49883"/>
        <label>1</label>
    </ligand>
</feature>
<feature type="sequence conflict" description="In Ref. 6; AAA24195." evidence="4" ref="6">
    <original>DTKPVLRALKRMLAMRHYKR</original>
    <variation>EYQTGTARTETYAGDASLQT</variation>
    <location>
        <begin position="398"/>
        <end position="417"/>
    </location>
</feature>
<feature type="strand" evidence="5">
    <location>
        <begin position="3"/>
        <end position="12"/>
    </location>
</feature>
<feature type="turn" evidence="5">
    <location>
        <begin position="13"/>
        <end position="15"/>
    </location>
</feature>
<feature type="helix" evidence="5">
    <location>
        <begin position="21"/>
        <end position="30"/>
    </location>
</feature>
<feature type="strand" evidence="5">
    <location>
        <begin position="41"/>
        <end position="49"/>
    </location>
</feature>
<feature type="turn" evidence="5">
    <location>
        <begin position="51"/>
        <end position="57"/>
    </location>
</feature>
<feature type="helix" evidence="5">
    <location>
        <begin position="59"/>
        <end position="62"/>
    </location>
</feature>
<feature type="strand" evidence="5">
    <location>
        <begin position="65"/>
        <end position="68"/>
    </location>
</feature>
<feature type="strand" evidence="5">
    <location>
        <begin position="74"/>
        <end position="76"/>
    </location>
</feature>
<feature type="helix" evidence="5">
    <location>
        <begin position="81"/>
        <end position="85"/>
    </location>
</feature>
<feature type="turn" evidence="5">
    <location>
        <begin position="86"/>
        <end position="89"/>
    </location>
</feature>
<feature type="helix" evidence="5">
    <location>
        <begin position="97"/>
        <end position="100"/>
    </location>
</feature>
<feature type="strand" evidence="5">
    <location>
        <begin position="104"/>
        <end position="106"/>
    </location>
</feature>
<feature type="helix" evidence="5">
    <location>
        <begin position="109"/>
        <end position="113"/>
    </location>
</feature>
<feature type="strand" evidence="5">
    <location>
        <begin position="126"/>
        <end position="128"/>
    </location>
</feature>
<feature type="turn" evidence="5">
    <location>
        <begin position="129"/>
        <end position="131"/>
    </location>
</feature>
<feature type="turn" evidence="5">
    <location>
        <begin position="142"/>
        <end position="148"/>
    </location>
</feature>
<feature type="helix" evidence="5">
    <location>
        <begin position="152"/>
        <end position="155"/>
    </location>
</feature>
<feature type="helix" evidence="5">
    <location>
        <begin position="159"/>
        <end position="161"/>
    </location>
</feature>
<feature type="helix" evidence="5">
    <location>
        <begin position="167"/>
        <end position="170"/>
    </location>
</feature>
<feature type="helix" evidence="5">
    <location>
        <begin position="172"/>
        <end position="174"/>
    </location>
</feature>
<feature type="strand" evidence="5">
    <location>
        <begin position="178"/>
        <end position="182"/>
    </location>
</feature>
<feature type="helix" evidence="5">
    <location>
        <begin position="191"/>
        <end position="194"/>
    </location>
</feature>
<feature type="strand" evidence="5">
    <location>
        <begin position="201"/>
        <end position="204"/>
    </location>
</feature>
<feature type="turn" evidence="5">
    <location>
        <begin position="205"/>
        <end position="207"/>
    </location>
</feature>
<feature type="strand" evidence="5">
    <location>
        <begin position="210"/>
        <end position="212"/>
    </location>
</feature>
<feature type="turn" evidence="5">
    <location>
        <begin position="214"/>
        <end position="216"/>
    </location>
</feature>
<feature type="helix" evidence="5">
    <location>
        <begin position="223"/>
        <end position="226"/>
    </location>
</feature>
<feature type="strand" evidence="5">
    <location>
        <begin position="232"/>
        <end position="235"/>
    </location>
</feature>
<feature type="turn" evidence="5">
    <location>
        <begin position="236"/>
        <end position="239"/>
    </location>
</feature>
<feature type="strand" evidence="5">
    <location>
        <begin position="240"/>
        <end position="243"/>
    </location>
</feature>
<feature type="helix" evidence="5">
    <location>
        <begin position="248"/>
        <end position="251"/>
    </location>
</feature>
<feature type="turn" evidence="5">
    <location>
        <begin position="252"/>
        <end position="254"/>
    </location>
</feature>
<feature type="helix" evidence="5">
    <location>
        <begin position="258"/>
        <end position="261"/>
    </location>
</feature>
<feature type="strand" evidence="5">
    <location>
        <begin position="268"/>
        <end position="276"/>
    </location>
</feature>
<feature type="helix" evidence="5">
    <location>
        <begin position="277"/>
        <end position="279"/>
    </location>
</feature>
<feature type="helix" evidence="5">
    <location>
        <begin position="280"/>
        <end position="284"/>
    </location>
</feature>
<feature type="helix" evidence="5">
    <location>
        <begin position="289"/>
        <end position="291"/>
    </location>
</feature>
<feature type="helix" evidence="5">
    <location>
        <begin position="292"/>
        <end position="297"/>
    </location>
</feature>
<feature type="helix" evidence="5">
    <location>
        <begin position="306"/>
        <end position="314"/>
    </location>
</feature>
<feature type="helix" evidence="5">
    <location>
        <begin position="319"/>
        <end position="325"/>
    </location>
</feature>
<feature type="helix" evidence="5">
    <location>
        <begin position="329"/>
        <end position="334"/>
    </location>
</feature>
<feature type="strand" evidence="5">
    <location>
        <begin position="341"/>
        <end position="343"/>
    </location>
</feature>
<feature type="helix" evidence="5">
    <location>
        <begin position="345"/>
        <end position="347"/>
    </location>
</feature>
<feature type="strand" evidence="5">
    <location>
        <begin position="352"/>
        <end position="356"/>
    </location>
</feature>
<feature type="strand" evidence="5">
    <location>
        <begin position="366"/>
        <end position="368"/>
    </location>
</feature>
<feature type="helix" evidence="5">
    <location>
        <begin position="380"/>
        <end position="382"/>
    </location>
</feature>
<feature type="strand" evidence="5">
    <location>
        <begin position="383"/>
        <end position="385"/>
    </location>
</feature>
<feature type="helix" evidence="5">
    <location>
        <begin position="387"/>
        <end position="394"/>
    </location>
</feature>
<feature type="helix" evidence="5">
    <location>
        <begin position="399"/>
        <end position="420"/>
    </location>
</feature>
<feature type="helix" evidence="5">
    <location>
        <begin position="428"/>
        <end position="432"/>
    </location>
</feature>
<feature type="helix" evidence="5">
    <location>
        <begin position="437"/>
        <end position="447"/>
    </location>
</feature>
<feature type="helix" evidence="5">
    <location>
        <begin position="452"/>
        <end position="455"/>
    </location>
</feature>
<feature type="turn" evidence="5">
    <location>
        <begin position="463"/>
        <end position="466"/>
    </location>
</feature>
<feature type="helix" evidence="5">
    <location>
        <begin position="469"/>
        <end position="475"/>
    </location>
</feature>
<reference key="1">
    <citation type="journal article" date="1989" name="Mol. Gen. Genet.">
        <title>Nitrate reductase of Escherichia coli: completion of the nucleotide sequence of the nar operon and reassessment of the role of the alpha and beta subunits in iron binding and electron transfer.</title>
        <authorList>
            <person name="Blasco F."/>
            <person name="Iobbi C."/>
            <person name="Giordano G."/>
            <person name="Chippaux M."/>
            <person name="Bonnefoy V."/>
        </authorList>
    </citation>
    <scope>NUCLEOTIDE SEQUENCE [GENOMIC DNA]</scope>
    <source>
        <strain>K12 / TG1</strain>
    </source>
</reference>
<reference key="2">
    <citation type="submission" date="1991-07" db="EMBL/GenBank/DDBJ databases">
        <authorList>
            <person name="Blasco F."/>
        </authorList>
    </citation>
    <scope>SEQUENCE REVISION TO 398-417</scope>
    <source>
        <strain>K12 / TG1</strain>
    </source>
</reference>
<reference key="3">
    <citation type="journal article" date="1996" name="DNA Res.">
        <title>A 718-kb DNA sequence of the Escherichia coli K-12 genome corresponding to the 12.7-28.0 min region on the linkage map.</title>
        <authorList>
            <person name="Oshima T."/>
            <person name="Aiba H."/>
            <person name="Baba T."/>
            <person name="Fujita K."/>
            <person name="Hayashi K."/>
            <person name="Honjo A."/>
            <person name="Ikemoto K."/>
            <person name="Inada T."/>
            <person name="Itoh T."/>
            <person name="Kajihara M."/>
            <person name="Kanai K."/>
            <person name="Kashimoto K."/>
            <person name="Kimura S."/>
            <person name="Kitagawa M."/>
            <person name="Makino K."/>
            <person name="Masuda S."/>
            <person name="Miki T."/>
            <person name="Mizobuchi K."/>
            <person name="Mori H."/>
            <person name="Motomura K."/>
            <person name="Nakamura Y."/>
            <person name="Nashimoto H."/>
            <person name="Nishio Y."/>
            <person name="Saito N."/>
            <person name="Sampei G."/>
            <person name="Seki Y."/>
            <person name="Tagami H."/>
            <person name="Takemoto K."/>
            <person name="Wada C."/>
            <person name="Yamamoto Y."/>
            <person name="Yano M."/>
            <person name="Horiuchi T."/>
        </authorList>
    </citation>
    <scope>NUCLEOTIDE SEQUENCE [LARGE SCALE GENOMIC DNA]</scope>
    <source>
        <strain>K12 / W3110 / ATCC 27325 / DSM 5911</strain>
    </source>
</reference>
<reference key="4">
    <citation type="journal article" date="1997" name="Science">
        <title>The complete genome sequence of Escherichia coli K-12.</title>
        <authorList>
            <person name="Blattner F.R."/>
            <person name="Plunkett G. III"/>
            <person name="Bloch C.A."/>
            <person name="Perna N.T."/>
            <person name="Burland V."/>
            <person name="Riley M."/>
            <person name="Collado-Vides J."/>
            <person name="Glasner J.D."/>
            <person name="Rode C.K."/>
            <person name="Mayhew G.F."/>
            <person name="Gregor J."/>
            <person name="Davis N.W."/>
            <person name="Kirkpatrick H.A."/>
            <person name="Goeden M.A."/>
            <person name="Rose D.J."/>
            <person name="Mau B."/>
            <person name="Shao Y."/>
        </authorList>
    </citation>
    <scope>NUCLEOTIDE SEQUENCE [LARGE SCALE GENOMIC DNA]</scope>
    <source>
        <strain>K12 / MG1655 / ATCC 47076</strain>
    </source>
</reference>
<reference key="5">
    <citation type="journal article" date="2006" name="Mol. Syst. Biol.">
        <title>Highly accurate genome sequences of Escherichia coli K-12 strains MG1655 and W3110.</title>
        <authorList>
            <person name="Hayashi K."/>
            <person name="Morooka N."/>
            <person name="Yamamoto Y."/>
            <person name="Fujita K."/>
            <person name="Isono K."/>
            <person name="Choi S."/>
            <person name="Ohtsubo E."/>
            <person name="Baba T."/>
            <person name="Wanner B.L."/>
            <person name="Mori H."/>
            <person name="Horiuchi T."/>
        </authorList>
    </citation>
    <scope>NUCLEOTIDE SEQUENCE [LARGE SCALE GENOMIC DNA]</scope>
    <source>
        <strain>K12 / W3110 / ATCC 27325 / DSM 5911</strain>
    </source>
</reference>
<reference key="6">
    <citation type="journal article" date="1988" name="J. Bacteriol.">
        <title>narI region of the Escherichia coli nitrate reductase (nar) operon contains two genes.</title>
        <authorList>
            <person name="Sodergren E.J."/>
            <person name="Demoss J.A."/>
        </authorList>
    </citation>
    <scope>NUCLEOTIDE SEQUENCE [GENOMIC DNA] OF 365-512</scope>
</reference>
<reference key="7">
    <citation type="journal article" date="1988" name="J. Biol. Chem.">
        <title>Roles of the narJ and narI gene products in the expression of nitrate reductase in Escherichia coli.</title>
        <authorList>
            <person name="Sodergren E.J."/>
            <person name="Hsu P.Y."/>
            <person name="Demoss J.A."/>
        </authorList>
    </citation>
    <scope>PROTEIN SEQUENCE OF 1-10</scope>
</reference>
<reference key="8">
    <citation type="journal article" date="1992" name="Eur. J. Biochem.">
        <title>EPR and redox characterization of iron-sulfur centers in nitrate reductases A and Z from Escherichia coli. Evidence for a high-potential and a low-potential class and their relevance in the electron-transfer mechanism.</title>
        <authorList>
            <person name="Guigliarelli B."/>
            <person name="Asso M."/>
            <person name="More C."/>
            <person name="Augier V."/>
            <person name="Blasco F."/>
            <person name="Pommier J."/>
            <person name="Giordano G."/>
            <person name="Bertrand P."/>
        </authorList>
    </citation>
    <scope>EPR SPECTROSCOPY OF IRON-SULFUR CLUSTERS</scope>
</reference>
<reference key="9">
    <citation type="journal article" date="1993" name="Biochemistry">
        <title>Site-directed mutagenesis of conserved cysteine residues within the beta subunit of Escherichia coli nitrate reductase. Physiological, biochemical, and EPR characterization of the mutated enzymes.</title>
        <authorList>
            <person name="Augier V."/>
            <person name="Guigliarelli B."/>
            <person name="Asso M."/>
            <person name="Bertrand P."/>
            <person name="Frixon C."/>
            <person name="Giordano G."/>
            <person name="Chippaux M."/>
            <person name="Blasco F."/>
        </authorList>
    </citation>
    <scope>MUTAGENESIS OF CYSTEINE RESIDUES</scope>
    <scope>EPR SPECTROSCOPY OF IRON-SULFUR CLUSTERS</scope>
</reference>
<reference key="10">
    <citation type="journal article" date="1993" name="Biochemistry">
        <title>Removal of the high-potential [4Fe-4S] center of the beta-subunit from Escherichia coli nitrate reductase. Physiological, biochemical, and EPR characterization of site-directed mutated enzymes.</title>
        <authorList>
            <person name="Augier V."/>
            <person name="Asso M."/>
            <person name="Guigliarelli B."/>
            <person name="More C."/>
            <person name="Bertrand P."/>
            <person name="Santini C.-L."/>
            <person name="Blasco F."/>
            <person name="Chippaux M."/>
            <person name="Giordano G."/>
        </authorList>
    </citation>
    <scope>MUTAGENESIS OF CYSTEINE RESIDUES</scope>
    <scope>EPR SPECTROSCOPY OF IRON-SULFUR CLUSTERS</scope>
</reference>
<reference key="11">
    <citation type="journal article" date="1996" name="Biochemistry">
        <title>Complete coordination of the four Fe-S centers of the beta subunit from Escherichia coli nitrate reductase. Physiological, biochemical, and EPR characterization of site-directed mutants lacking the highest or lowest potential [4Fe-4S] clusters.</title>
        <authorList>
            <person name="Guigliarelli B."/>
            <person name="Magalon A."/>
            <person name="Asso M."/>
            <person name="Bertrand P."/>
            <person name="Frixon C."/>
            <person name="Giordano G."/>
            <person name="Blasco F."/>
        </authorList>
    </citation>
    <scope>MUTAGENESIS OF CYSTEINE RESIDUES</scope>
    <scope>EPR SPECTROSCOPY OF IRON-SULFUR CLUSTERS</scope>
</reference>
<reference key="12">
    <citation type="journal article" date="1998" name="J. Biol. Chem.">
        <title>The molybdenum cofactor of Escherichia coli nitrate reductase A (NarGHI). Effect of a mobAB mutation and interactions with [Fe-S] clusters.</title>
        <authorList>
            <person name="Rothery R.A."/>
            <person name="Magalon A."/>
            <person name="Giordano G."/>
            <person name="Guigliarelli B."/>
            <person name="Blasco F."/>
            <person name="Weiner J.H."/>
        </authorList>
    </citation>
    <scope>EPR SPECTROSCOPY</scope>
    <scope>REDOX POTENTIOMETRY OF IRON-SULFUR CLUSTERS</scope>
</reference>
<reference key="13">
    <citation type="journal article" date="2003" name="Nat. Struct. Biol.">
        <title>Insights into the respiratory electron transfer pathway from the structure of nitrate reductase A.</title>
        <authorList>
            <person name="Bertero M.G."/>
            <person name="Rothery R.A."/>
            <person name="Palak M."/>
            <person name="Hou C."/>
            <person name="Lim D."/>
            <person name="Blasco F."/>
            <person name="Weiner J.H."/>
            <person name="Strynadka N.C.J."/>
        </authorList>
    </citation>
    <scope>X-RAY CRYSTALLOGRAPHY (1.90 ANGSTROMS) IN COMPLEX WITH IRON-SULFUR (3FE-4S) AND IRON-SULFUR (4FE-4S)</scope>
    <scope>COFACTOR</scope>
    <scope>SUBUNIT</scope>
</reference>
<reference key="14">
    <citation type="journal article" date="2004" name="Structure">
        <title>Architecture of NarGH reveals a structural classification of Mo-bisMGD enzymes.</title>
        <authorList>
            <person name="Jormakka M."/>
            <person name="Richardson D."/>
            <person name="Byrne B."/>
            <person name="Iwata S."/>
        </authorList>
    </citation>
    <scope>X-RAY CRYSTALLOGRAPHY (2.20 ANGSTROMS) IN COMPLEX WITH IRON-SULFUR (3FE-4S) AND IRON-SULFUR (4FE-4S)</scope>
    <scope>COFACTOR</scope>
</reference>
<comment type="function">
    <text>The nitrate reductase enzyme complex allows E.coli to use nitrate as an electron acceptor during anaerobic growth. The beta chain is an electron transfer unit containing four cysteine clusters involved in the formation of iron-sulfur centers. Electrons are transferred from the gamma chain to the molybdenum cofactor of the alpha subunit.</text>
</comment>
<comment type="catalytic activity">
    <reaction>
        <text>nitrate + a quinol = a quinone + nitrite + H2O</text>
        <dbReference type="Rhea" id="RHEA:56144"/>
        <dbReference type="ChEBI" id="CHEBI:15377"/>
        <dbReference type="ChEBI" id="CHEBI:16301"/>
        <dbReference type="ChEBI" id="CHEBI:17632"/>
        <dbReference type="ChEBI" id="CHEBI:24646"/>
        <dbReference type="ChEBI" id="CHEBI:132124"/>
        <dbReference type="EC" id="1.7.5.1"/>
    </reaction>
</comment>
<comment type="cofactor">
    <cofactor evidence="2 3">
        <name>[4Fe-4S] cluster</name>
        <dbReference type="ChEBI" id="CHEBI:49883"/>
    </cofactor>
    <text evidence="2 3">Binds 3 [4Fe-4S] clusters per subunit.</text>
</comment>
<comment type="cofactor">
    <cofactor evidence="2 3">
        <name>[3Fe-4S] cluster</name>
        <dbReference type="ChEBI" id="CHEBI:21137"/>
    </cofactor>
    <text evidence="2 3">Binds 1 [3Fe-4S] cluster per subunit.</text>
</comment>
<comment type="subunit">
    <text evidence="2">Dimer of heterotrimers each composed of an alpha, a beta and a gamma chain. Alpha and beta are catalytic chains; gamma chains are involved in binding the enzyme complex to the cytoplasmic membrane.</text>
</comment>
<comment type="interaction">
    <interactant intactId="EBI-555067">
        <id>P11349</id>
    </interactant>
    <interactant intactId="EBI-561933">
        <id>P42593</id>
        <label>fadH</label>
    </interactant>
    <organismsDiffer>false</organismsDiffer>
    <experiments>3</experiments>
</comment>
<comment type="interaction">
    <interactant intactId="EBI-555067">
        <id>P11349</id>
    </interactant>
    <interactant intactId="EBI-547248">
        <id>P09152</id>
        <label>narG</label>
    </interactant>
    <organismsDiffer>false</organismsDiffer>
    <experiments>13</experiments>
</comment>
<comment type="interaction">
    <interactant intactId="EBI-555067">
        <id>P11349</id>
    </interactant>
    <interactant intactId="EBI-555088">
        <id>P19317</id>
        <label>narW</label>
    </interactant>
    <organismsDiffer>false</organismsDiffer>
    <experiments>3</experiments>
</comment>
<comment type="interaction">
    <interactant intactId="EBI-555067">
        <id>P11349</id>
    </interactant>
    <interactant intactId="EBI-555059">
        <id>P19318</id>
        <label>narY</label>
    </interactant>
    <organismsDiffer>false</organismsDiffer>
    <experiments>3</experiments>
</comment>
<comment type="interaction">
    <interactant intactId="EBI-555067">
        <id>P11349</id>
    </interactant>
    <interactant intactId="EBI-547262">
        <id>P19319</id>
        <label>narZ</label>
    </interactant>
    <organismsDiffer>false</organismsDiffer>
    <experiments>6</experiments>
</comment>
<comment type="subcellular location">
    <subcellularLocation>
        <location>Cell membrane</location>
        <topology>Peripheral membrane protein</topology>
    </subcellularLocation>
</comment>
<comment type="induction">
    <text>By nitrate.</text>
</comment>
<organism>
    <name type="scientific">Escherichia coli (strain K12)</name>
    <dbReference type="NCBI Taxonomy" id="83333"/>
    <lineage>
        <taxon>Bacteria</taxon>
        <taxon>Pseudomonadati</taxon>
        <taxon>Pseudomonadota</taxon>
        <taxon>Gammaproteobacteria</taxon>
        <taxon>Enterobacterales</taxon>
        <taxon>Enterobacteriaceae</taxon>
        <taxon>Escherichia</taxon>
    </lineage>
</organism>
<sequence length="512" mass="58066">MKIRSQVGMVLNLDKCIGCHTCSVTCKNVWTSREGVEYAWFNNVETKPGQGFPTDWENQEKYKGGWIRKINGKLQPRMGNRAMLLGKIFANPHLPGIDDYYEPFDFDYQNLHTAPEGSKSQPIARPRSLITGERMAKIEKGPNWEDDLGGEFDKLAKDKNFDNIQKAMYSQFENTFMMYLPRLCEHCLNPACVATCPSGAIYKREEDGIVLIDQDKCRGWRMCITGCPYKKIYFNWKSGKSEKCIFCYPRIEAGQPTVCSETCVGRIRYLGVLLYDADAIERAASTENEKDLYQRQLDVFLDPNDPKVIEQAIKDGIPLSVIEAAQQSPVYKMAMEWKLALPLHPEYRTLPMVWYVPPLSPIQSAADAGELGSNGILPDVESLRIPVQYLANLLTAGDTKPVLRALKRMLAMRHYKRAETVDGKVDTRALEEVGLTEAQAQEMYRYLAIANYEDRFVVPSSHRELAREAFPEKNGCGFTFGDGCHGSDTKFNLFNSRRIDAIDVTSKTEPHP</sequence>
<gene>
    <name type="primary">narH</name>
    <name type="ordered locus">b1225</name>
    <name type="ordered locus">JW1216</name>
</gene>
<protein>
    <recommendedName>
        <fullName>Respiratory nitrate reductase 1 beta chain</fullName>
        <ecNumber>1.7.5.1</ecNumber>
    </recommendedName>
    <alternativeName>
        <fullName>Nitrate reductase A subunit beta</fullName>
    </alternativeName>
    <alternativeName>
        <fullName>Quinol-nitrate oxidoreductase subunit beta</fullName>
    </alternativeName>
</protein>
<evidence type="ECO:0000255" key="1">
    <source>
        <dbReference type="PROSITE-ProRule" id="PRU00711"/>
    </source>
</evidence>
<evidence type="ECO:0000269" key="2">
    <source>
    </source>
</evidence>
<evidence type="ECO:0000269" key="3">
    <source>
    </source>
</evidence>
<evidence type="ECO:0000305" key="4"/>
<evidence type="ECO:0007829" key="5">
    <source>
        <dbReference type="PDB" id="1Q16"/>
    </source>
</evidence>
<dbReference type="EC" id="1.7.5.1"/>
<dbReference type="EMBL" id="M20147">
    <property type="protein sequence ID" value="AAA24195.1"/>
    <property type="molecule type" value="Genomic_DNA"/>
</dbReference>
<dbReference type="EMBL" id="U00096">
    <property type="protein sequence ID" value="AAC74309.1"/>
    <property type="molecule type" value="Genomic_DNA"/>
</dbReference>
<dbReference type="EMBL" id="AP009048">
    <property type="protein sequence ID" value="BAA36095.1"/>
    <property type="molecule type" value="Genomic_DNA"/>
</dbReference>
<dbReference type="EMBL" id="X16181">
    <property type="protein sequence ID" value="CAA34304.1"/>
    <property type="molecule type" value="Genomic_DNA"/>
</dbReference>
<dbReference type="PIR" id="F64869">
    <property type="entry name" value="RDECNB"/>
</dbReference>
<dbReference type="RefSeq" id="NP_415743.1">
    <property type="nucleotide sequence ID" value="NC_000913.3"/>
</dbReference>
<dbReference type="RefSeq" id="WP_000702650.1">
    <property type="nucleotide sequence ID" value="NZ_STEB01000023.1"/>
</dbReference>
<dbReference type="PDB" id="1Q16">
    <property type="method" value="X-ray"/>
    <property type="resolution" value="1.90 A"/>
    <property type="chains" value="B=1-512"/>
</dbReference>
<dbReference type="PDB" id="1R27">
    <property type="method" value="X-ray"/>
    <property type="resolution" value="2.00 A"/>
    <property type="chains" value="B/D=1-512"/>
</dbReference>
<dbReference type="PDB" id="1SIW">
    <property type="method" value="X-ray"/>
    <property type="resolution" value="2.20 A"/>
    <property type="chains" value="B=1-512"/>
</dbReference>
<dbReference type="PDB" id="1Y4Z">
    <property type="method" value="X-ray"/>
    <property type="resolution" value="2.00 A"/>
    <property type="chains" value="B=1-512"/>
</dbReference>
<dbReference type="PDB" id="1Y5I">
    <property type="method" value="X-ray"/>
    <property type="resolution" value="1.90 A"/>
    <property type="chains" value="B=1-512"/>
</dbReference>
<dbReference type="PDB" id="1Y5L">
    <property type="method" value="X-ray"/>
    <property type="resolution" value="2.50 A"/>
    <property type="chains" value="B=1-512"/>
</dbReference>
<dbReference type="PDB" id="1Y5N">
    <property type="method" value="X-ray"/>
    <property type="resolution" value="2.50 A"/>
    <property type="chains" value="B=1-512"/>
</dbReference>
<dbReference type="PDB" id="3EGW">
    <property type="method" value="X-ray"/>
    <property type="resolution" value="1.90 A"/>
    <property type="chains" value="B=1-509"/>
</dbReference>
<dbReference type="PDB" id="3IR5">
    <property type="method" value="X-ray"/>
    <property type="resolution" value="2.30 A"/>
    <property type="chains" value="B=1-512"/>
</dbReference>
<dbReference type="PDB" id="3IR6">
    <property type="method" value="X-ray"/>
    <property type="resolution" value="2.80 A"/>
    <property type="chains" value="B=1-512"/>
</dbReference>
<dbReference type="PDB" id="3IR7">
    <property type="method" value="X-ray"/>
    <property type="resolution" value="2.50 A"/>
    <property type="chains" value="B=1-512"/>
</dbReference>
<dbReference type="PDBsum" id="1Q16"/>
<dbReference type="PDBsum" id="1R27"/>
<dbReference type="PDBsum" id="1SIW"/>
<dbReference type="PDBsum" id="1Y4Z"/>
<dbReference type="PDBsum" id="1Y5I"/>
<dbReference type="PDBsum" id="1Y5L"/>
<dbReference type="PDBsum" id="1Y5N"/>
<dbReference type="PDBsum" id="3EGW"/>
<dbReference type="PDBsum" id="3IR5"/>
<dbReference type="PDBsum" id="3IR6"/>
<dbReference type="PDBsum" id="3IR7"/>
<dbReference type="SMR" id="P11349"/>
<dbReference type="BioGRID" id="4262231">
    <property type="interactions" value="34"/>
</dbReference>
<dbReference type="BioGRID" id="850147">
    <property type="interactions" value="6"/>
</dbReference>
<dbReference type="ComplexPortal" id="CPX-1974">
    <property type="entry name" value="Nitrate reductase A complex"/>
</dbReference>
<dbReference type="DIP" id="DIP-10312N"/>
<dbReference type="FunCoup" id="P11349">
    <property type="interactions" value="233"/>
</dbReference>
<dbReference type="IntAct" id="P11349">
    <property type="interactions" value="15"/>
</dbReference>
<dbReference type="STRING" id="511145.b1225"/>
<dbReference type="DrugBank" id="DB07349">
    <property type="generic name" value="(1S)-2-{[{[(2S)-2,3-DIHYDROXYPROPYL]OXY}(HYDROXY)PHOSPHORYL]OXY}-1-[(PENTANOYLOXY)METHYL]ETHYL OCTANOATE"/>
</dbReference>
<dbReference type="DrugBank" id="DB04464">
    <property type="generic name" value="N-Formylmethionine"/>
</dbReference>
<dbReference type="TCDB" id="5.A.3.1.1">
    <property type="family name" value="the prokaryotic molybdopterin-containing oxidoreductase (pmo) family"/>
</dbReference>
<dbReference type="jPOST" id="P11349"/>
<dbReference type="PaxDb" id="511145-b1225"/>
<dbReference type="EnsemblBacteria" id="AAC74309">
    <property type="protein sequence ID" value="AAC74309"/>
    <property type="gene ID" value="b1225"/>
</dbReference>
<dbReference type="GeneID" id="75057227"/>
<dbReference type="GeneID" id="945780"/>
<dbReference type="KEGG" id="ecj:JW1216"/>
<dbReference type="KEGG" id="eco:b1225"/>
<dbReference type="KEGG" id="ecoc:C3026_07205"/>
<dbReference type="PATRIC" id="fig|1411691.4.peg.1056"/>
<dbReference type="EchoBASE" id="EB0633"/>
<dbReference type="eggNOG" id="COG1140">
    <property type="taxonomic scope" value="Bacteria"/>
</dbReference>
<dbReference type="HOGENOM" id="CLU_043374_5_2_6"/>
<dbReference type="InParanoid" id="P11349"/>
<dbReference type="OMA" id="KVYFNWQ"/>
<dbReference type="OrthoDB" id="9779457at2"/>
<dbReference type="PhylomeDB" id="P11349"/>
<dbReference type="BioCyc" id="EcoCyc:NARH-MONOMER"/>
<dbReference type="BioCyc" id="MetaCyc:NARH-MONOMER"/>
<dbReference type="BRENDA" id="1.7.5.1">
    <property type="organism ID" value="2026"/>
</dbReference>
<dbReference type="EvolutionaryTrace" id="P11349"/>
<dbReference type="PHI-base" id="PHI:10513"/>
<dbReference type="PRO" id="PR:P11349"/>
<dbReference type="Proteomes" id="UP000000625">
    <property type="component" value="Chromosome"/>
</dbReference>
<dbReference type="GO" id="GO:0016020">
    <property type="term" value="C:membrane"/>
    <property type="evidence" value="ECO:0000314"/>
    <property type="project" value="ComplexPortal"/>
</dbReference>
<dbReference type="GO" id="GO:0044799">
    <property type="term" value="C:NarGHI complex"/>
    <property type="evidence" value="ECO:0000314"/>
    <property type="project" value="EcoCyc"/>
</dbReference>
<dbReference type="GO" id="GO:0051538">
    <property type="term" value="F:3 iron, 4 sulfur cluster binding"/>
    <property type="evidence" value="ECO:0000314"/>
    <property type="project" value="EcoCyc"/>
</dbReference>
<dbReference type="GO" id="GO:0051539">
    <property type="term" value="F:4 iron, 4 sulfur cluster binding"/>
    <property type="evidence" value="ECO:0000314"/>
    <property type="project" value="EcoCyc"/>
</dbReference>
<dbReference type="GO" id="GO:0009055">
    <property type="term" value="F:electron transfer activity"/>
    <property type="evidence" value="ECO:0000314"/>
    <property type="project" value="EcoCyc"/>
</dbReference>
<dbReference type="GO" id="GO:0046872">
    <property type="term" value="F:metal ion binding"/>
    <property type="evidence" value="ECO:0007669"/>
    <property type="project" value="UniProtKB-KW"/>
</dbReference>
<dbReference type="GO" id="GO:0160182">
    <property type="term" value="F:nitrate reductase (quinone) activity"/>
    <property type="evidence" value="ECO:0007669"/>
    <property type="project" value="UniProtKB-EC"/>
</dbReference>
<dbReference type="GO" id="GO:0008940">
    <property type="term" value="F:nitrate reductase activity"/>
    <property type="evidence" value="ECO:0000315"/>
    <property type="project" value="EcoCyc"/>
</dbReference>
<dbReference type="GO" id="GO:0019645">
    <property type="term" value="P:anaerobic electron transport chain"/>
    <property type="evidence" value="ECO:0000314"/>
    <property type="project" value="ComplexPortal"/>
</dbReference>
<dbReference type="GO" id="GO:0009061">
    <property type="term" value="P:anaerobic respiration"/>
    <property type="evidence" value="ECO:0000270"/>
    <property type="project" value="EcoCyc"/>
</dbReference>
<dbReference type="GO" id="GO:0042128">
    <property type="term" value="P:nitrate assimilation"/>
    <property type="evidence" value="ECO:0007669"/>
    <property type="project" value="UniProtKB-KW"/>
</dbReference>
<dbReference type="GO" id="GO:0042126">
    <property type="term" value="P:nitrate metabolic process"/>
    <property type="evidence" value="ECO:0000314"/>
    <property type="project" value="ComplexPortal"/>
</dbReference>
<dbReference type="CDD" id="cd10557">
    <property type="entry name" value="NarH_beta-like"/>
    <property type="match status" value="1"/>
</dbReference>
<dbReference type="FunFam" id="3.30.70.20:FF:000005">
    <property type="entry name" value="Respiratory nitrate reductase beta subunit"/>
    <property type="match status" value="1"/>
</dbReference>
<dbReference type="FunFam" id="3.30.70.20:FF:000008">
    <property type="entry name" value="Respiratory nitrate reductase beta subunit"/>
    <property type="match status" value="1"/>
</dbReference>
<dbReference type="FunFam" id="3.30.70.20:FF:000010">
    <property type="entry name" value="Respiratory nitrate reductase beta subunit"/>
    <property type="match status" value="1"/>
</dbReference>
<dbReference type="FunFam" id="1.10.3650.10:FF:000001">
    <property type="entry name" value="Respiratory nitrate reductase subunit beta"/>
    <property type="match status" value="1"/>
</dbReference>
<dbReference type="Gene3D" id="3.30.70.20">
    <property type="match status" value="3"/>
</dbReference>
<dbReference type="Gene3D" id="1.10.3650.10">
    <property type="entry name" value="nitrate reductase domain like"/>
    <property type="match status" value="1"/>
</dbReference>
<dbReference type="InterPro" id="IPR017896">
    <property type="entry name" value="4Fe4S_Fe-S-bd"/>
</dbReference>
<dbReference type="InterPro" id="IPR029263">
    <property type="entry name" value="Nitr_red_bet_C"/>
</dbReference>
<dbReference type="InterPro" id="IPR038262">
    <property type="entry name" value="Nitr_red_bet_C_sf"/>
</dbReference>
<dbReference type="InterPro" id="IPR006547">
    <property type="entry name" value="NO3_Rdtase_bsu"/>
</dbReference>
<dbReference type="NCBIfam" id="TIGR01660">
    <property type="entry name" value="narH"/>
    <property type="match status" value="1"/>
</dbReference>
<dbReference type="PANTHER" id="PTHR43518">
    <property type="entry name" value="NITRATE REDUCTASE BETA SUBUNIT"/>
    <property type="match status" value="1"/>
</dbReference>
<dbReference type="PANTHER" id="PTHR43518:SF1">
    <property type="entry name" value="RESPIRATORY NITRATE REDUCTASE 1 BETA CHAIN"/>
    <property type="match status" value="1"/>
</dbReference>
<dbReference type="Pfam" id="PF13247">
    <property type="entry name" value="Fer4_11"/>
    <property type="match status" value="1"/>
</dbReference>
<dbReference type="Pfam" id="PF14711">
    <property type="entry name" value="Nitr_red_bet_C"/>
    <property type="match status" value="1"/>
</dbReference>
<dbReference type="SUPFAM" id="SSF54862">
    <property type="entry name" value="4Fe-4S ferredoxins"/>
    <property type="match status" value="1"/>
</dbReference>
<dbReference type="PROSITE" id="PS51379">
    <property type="entry name" value="4FE4S_FER_2"/>
    <property type="match status" value="3"/>
</dbReference>